<sequence>MGAQVSTQKTGAHETLLEAAQGATINYTNINYYKDAASNSANRQDFSQDPSKFTEPVKDIMIKSMPALNSPSAEECGYSDRVRSITLGNSTITTQESANVVVAYGRWPKYLEDDQATAEDQPTQPDVATCRFYTLESVQWEANSAGWWWKFPEALKDMGLFGQNMYYHYLGRAGYTIHVQCNASKFHQGCLLVVCVPEAEMGCAKPDENVDATNLTNGENTCELTAGAAPAEKGKVQTAVCNATMGVAVGNLTIFPHQWINLRTNNCATIVMPYINSVPMDNMFRHYNFTLMVIPFVPLTSMGGSTYVPITVTIAPMCAEYNGLRLSTQHQGLPVMNVPGSNQFLTSDNFQSPCAMPEYDVTPPLDIPGEVNNLMEVAEVDSVVPVNNLSDNVKTIKAYQIPVSAGDSSRPEAVFKFQLDPGSGSVLKHTLLGEIINYYAHWSGSIKLTFVFCGSAMATGKLLIAYSPPGASAPATRKDAMLGTHIIWDLGLQSSCVLCVPWISQTHYRMVERDEYTTAGYISCWYQTNIIVPPDTPSQCYMLCLASACNDFSVRMLKDTPFIQQEAKLQGEPGKAIESAISRVADTISSGPTNSEQVPALTAAETGHTSQVVPGDTIQTRHVKNYHSRSESTIENFLCRSACVHIARYEAGANASNEDRFVRWEINNKELVQLRRKCEMFTYLRYDVEVTFVITSQQDQGTDLSQDMPVLTHQVMYVPPGGSVTKQGDSYAWQTSTNPSVFWTEGNAPPRMSIPFISIGNAYSSFYDGWSHFSQKGVYGYNTLNKMGTLFVRHVNKETPKPVTSTVRVYFKPKHIRAWIPRPPRLCPYKYKANVNFDVTAITDSRLTITTVPQVEHNLRTA</sequence>
<proteinExistence type="inferred from homology"/>
<organism>
    <name type="scientific">Echovirus 16 (strain Harrington)</name>
    <dbReference type="NCBI Taxonomy" id="103910"/>
    <lineage>
        <taxon>Viruses</taxon>
        <taxon>Riboviria</taxon>
        <taxon>Orthornavirae</taxon>
        <taxon>Pisuviricota</taxon>
        <taxon>Pisoniviricetes</taxon>
        <taxon>Picornavirales</taxon>
        <taxon>Picornaviridae</taxon>
        <taxon>Ensavirinae</taxon>
        <taxon>Enterovirus</taxon>
        <taxon>Enterovirus B</taxon>
    </lineage>
</organism>
<protein>
    <recommendedName>
        <fullName>Genome polyprotein</fullName>
    </recommendedName>
    <component>
        <recommendedName>
            <fullName>P1</fullName>
        </recommendedName>
    </component>
    <component>
        <recommendedName>
            <fullName>Capsid protein VP0</fullName>
        </recommendedName>
        <alternativeName>
            <fullName>VP4-VP2</fullName>
        </alternativeName>
    </component>
    <component>
        <recommendedName>
            <fullName>Capsid protein VP4</fullName>
        </recommendedName>
        <alternativeName>
            <fullName>P1A</fullName>
        </alternativeName>
        <alternativeName>
            <fullName>Virion protein 4</fullName>
        </alternativeName>
    </component>
    <component>
        <recommendedName>
            <fullName>Capsid protein VP2</fullName>
        </recommendedName>
        <alternativeName>
            <fullName>P1B</fullName>
        </alternativeName>
        <alternativeName>
            <fullName>Virion protein 2</fullName>
        </alternativeName>
    </component>
    <component>
        <recommendedName>
            <fullName>Capsid protein VP3</fullName>
        </recommendedName>
        <alternativeName>
            <fullName>P1C</fullName>
        </alternativeName>
        <alternativeName>
            <fullName>Virion protein 3</fullName>
        </alternativeName>
    </component>
    <component>
        <recommendedName>
            <fullName>Capsid protein VP1</fullName>
        </recommendedName>
        <alternativeName>
            <fullName>P1D</fullName>
        </alternativeName>
        <alternativeName>
            <fullName>Virion protein 1</fullName>
        </alternativeName>
    </component>
</protein>
<comment type="function">
    <molecule>Capsid protein VP1</molecule>
    <text evidence="1">Forms an icosahedral capsid of pseudo T=3 symmetry with capsid proteins VP2 and VP3 (By similarity). The capsid is 300 Angstroms in diameter, composed of 60 copies of each capsid protein and enclosing the viral positive strand RNA genome (By similarity). Capsid protein VP1 mainly forms the vertices of the capsid (By similarity). Capsid protein VP1 interacts with host cell receptor to provide virion attachment to target host cells (By similarity). This attachment induces virion internalization (By similarity). Tyrosine kinases are probably involved in the entry process (By similarity). After binding to its receptor, the capsid undergoes conformational changes (By similarity). Capsid protein VP1 N-terminus (that contains an amphipathic alpha-helix) and capsid protein VP4 are externalized (By similarity). Together, they shape a pore in the host membrane through which viral genome is translocated to host cell cytoplasm (By similarity).</text>
</comment>
<comment type="function">
    <molecule>Capsid protein VP2</molecule>
    <text evidence="1">Forms an icosahedral capsid of pseudo T=3 symmetry with capsid proteins VP2 and VP3 (By similarity). The capsid is 300 Angstroms in diameter, composed of 60 copies of each capsid protein and enclosing the viral positive strand RNA genome (By similarity).</text>
</comment>
<comment type="function">
    <molecule>Capsid protein VP3</molecule>
    <text evidence="1">Forms an icosahedral capsid of pseudo T=3 symmetry with capsid proteins VP2 and VP3 (By similarity). The capsid is 300 Angstroms in diameter, composed of 60 copies of each capsid protein and enclosing the viral positive strand RNA genome (By similarity).</text>
</comment>
<comment type="function">
    <molecule>Capsid protein VP4</molecule>
    <text evidence="1">Lies on the inner surface of the capsid shell (By similarity). After binding to the host receptor, the capsid undergoes conformational changes (By similarity). Capsid protein VP4 is released, Capsid protein VP1 N-terminus is externalized, and together, they shape a pore in the host membrane through which the viral genome is translocated into the host cell cytoplasm (By similarity).</text>
</comment>
<comment type="function">
    <molecule>Capsid protein VP0</molecule>
    <text evidence="1">Component of immature procapsids, which is cleaved into capsid proteins VP4 and VP2 after maturation (By similarity). Allows the capsid to remain inactive before the maturation step (By similarity).</text>
</comment>
<comment type="subunit">
    <molecule>Capsid protein VP0</molecule>
    <text evidence="1">Interacts with capsid protein VP1 and capsid protein VP3 to form heterotrimeric protomers.</text>
</comment>
<comment type="subunit">
    <molecule>Capsid protein VP1</molecule>
    <text evidence="1">Interacts with capsid protein VP0, and capsid protein VP3 to form heterotrimeric protomers (By similarity). Five protomers subsequently associate to form pentamers which serve as building blocks for the capsid (By similarity). Interacts with capsid protein VP2, capsid protein VP3 and capsid protein VP4 following cleavage of capsid protein VP0 (By similarity).</text>
</comment>
<comment type="subunit">
    <molecule>Capsid protein VP2</molecule>
    <text evidence="1">Interacts with capsid protein VP1 and capsid protein VP3 in the mature capsid.</text>
</comment>
<comment type="subunit">
    <molecule>Capsid protein VP3</molecule>
    <text evidence="1">Interacts with capsid protein VP0 and capsid protein VP1 to form heterotrimeric protomers (By similarity). Five protomers subsequently associate to form pentamers which serve as building blocks for the capsid (By similarity). Interacts with capsid protein VP4 in the mature capsid (By similarity). Interacts with protein 2C; this interaction may be important for virion morphogenesis (By similarity).</text>
</comment>
<comment type="subunit">
    <molecule>Capsid protein VP4</molecule>
    <text evidence="1">Interacts with capsid protein VP1 and capsid protein VP3.</text>
</comment>
<comment type="subcellular location">
    <molecule>Capsid protein VP0</molecule>
    <subcellularLocation>
        <location>Virion</location>
    </subcellularLocation>
    <subcellularLocation>
        <location evidence="3">Host cytoplasm</location>
    </subcellularLocation>
</comment>
<comment type="subcellular location">
    <molecule>Capsid protein VP4</molecule>
    <subcellularLocation>
        <location>Virion</location>
    </subcellularLocation>
</comment>
<comment type="subcellular location">
    <molecule>Capsid protein VP2</molecule>
    <subcellularLocation>
        <location evidence="1">Virion</location>
    </subcellularLocation>
    <subcellularLocation>
        <location evidence="3">Host cytoplasm</location>
    </subcellularLocation>
</comment>
<comment type="subcellular location">
    <molecule>Capsid protein VP3</molecule>
    <subcellularLocation>
        <location evidence="1">Virion</location>
    </subcellularLocation>
    <subcellularLocation>
        <location evidence="3">Host cytoplasm</location>
    </subcellularLocation>
</comment>
<comment type="subcellular location">
    <molecule>Capsid protein VP1</molecule>
    <subcellularLocation>
        <location evidence="1">Virion</location>
    </subcellularLocation>
    <subcellularLocation>
        <location evidence="3">Host cytoplasm</location>
    </subcellularLocation>
</comment>
<comment type="PTM">
    <molecule>Genome polyprotein</molecule>
    <text evidence="1">Specific enzymatic cleavages in vivo by the viral proteases yield processing intermediates and the mature proteins.</text>
</comment>
<comment type="PTM">
    <molecule>Capsid protein VP0</molecule>
    <text evidence="1">Myristoylation is required for the formation of pentamers during virus assembly. Further assembly of 12 pentamers and a molecule of genomic RNA generates the provirion.</text>
</comment>
<comment type="PTM">
    <molecule>Capsid protein VP0</molecule>
    <text evidence="1">During virion maturation, immature virions are rendered infectious following cleavage of VP0 into VP4 and VP2. This maturation seems to be an autocatalytic event triggered by the presence of RNA in the capsid and it is followed by a conformational change infectious virion.</text>
</comment>
<comment type="PTM">
    <molecule>Capsid protein VP4</molecule>
    <text evidence="1">Myristoylation is required during RNA encapsidation and formation of the mature virus particle.</text>
</comment>
<comment type="similarity">
    <text evidence="3">Belongs to the picornaviruses polyprotein family.</text>
</comment>
<keyword id="KW-0068">Autocatalytic cleavage</keyword>
<keyword id="KW-0167">Capsid protein</keyword>
<keyword id="KW-1262">Eukaryotic host gene expression shutoff by virus</keyword>
<keyword id="KW-1193">Eukaryotic host translation shutoff by virus</keyword>
<keyword id="KW-1035">Host cytoplasm</keyword>
<keyword id="KW-1190">Host gene expression shutoff by virus</keyword>
<keyword id="KW-0945">Host-virus interaction</keyword>
<keyword id="KW-0449">Lipoprotein</keyword>
<keyword id="KW-0460">Magnesium</keyword>
<keyword id="KW-0519">Myristate</keyword>
<keyword id="KW-1172">Pore-mediated penetration of viral genome into host cell</keyword>
<keyword id="KW-1161">Viral attachment to host cell</keyword>
<keyword id="KW-1162">Viral penetration into host cytoplasm</keyword>
<keyword id="KW-0946">Virion</keyword>
<keyword id="KW-1160">Virus entry into host cell</keyword>
<dbReference type="EMBL" id="X89545">
    <property type="protein sequence ID" value="CAA61723.1"/>
    <property type="molecule type" value="Genomic_RNA"/>
</dbReference>
<dbReference type="SMR" id="Q66790"/>
<dbReference type="GO" id="GO:0030430">
    <property type="term" value="C:host cell cytoplasm"/>
    <property type="evidence" value="ECO:0007669"/>
    <property type="project" value="UniProtKB-SubCell"/>
</dbReference>
<dbReference type="GO" id="GO:0019028">
    <property type="term" value="C:viral capsid"/>
    <property type="evidence" value="ECO:0007669"/>
    <property type="project" value="UniProtKB-KW"/>
</dbReference>
<dbReference type="GO" id="GO:0005198">
    <property type="term" value="F:structural molecule activity"/>
    <property type="evidence" value="ECO:0007669"/>
    <property type="project" value="InterPro"/>
</dbReference>
<dbReference type="GO" id="GO:0044694">
    <property type="term" value="P:symbiont genome entry into host cell via pore formation in plasma membrane"/>
    <property type="evidence" value="ECO:0007669"/>
    <property type="project" value="UniProtKB-KW"/>
</dbReference>
<dbReference type="GO" id="GO:0039657">
    <property type="term" value="P:symbiont-mediated suppression of host gene expression"/>
    <property type="evidence" value="ECO:0007669"/>
    <property type="project" value="UniProtKB-KW"/>
</dbReference>
<dbReference type="GO" id="GO:0019062">
    <property type="term" value="P:virion attachment to host cell"/>
    <property type="evidence" value="ECO:0007669"/>
    <property type="project" value="UniProtKB-KW"/>
</dbReference>
<dbReference type="CDD" id="cd00205">
    <property type="entry name" value="rhv_like"/>
    <property type="match status" value="3"/>
</dbReference>
<dbReference type="FunFam" id="2.60.120.20:FF:000001">
    <property type="entry name" value="Genome polyprotein"/>
    <property type="match status" value="1"/>
</dbReference>
<dbReference type="FunFam" id="2.60.120.20:FF:000002">
    <property type="entry name" value="Genome polyprotein"/>
    <property type="match status" value="1"/>
</dbReference>
<dbReference type="FunFam" id="2.60.120.20:FF:000004">
    <property type="entry name" value="Genome polyprotein"/>
    <property type="match status" value="1"/>
</dbReference>
<dbReference type="FunFam" id="4.10.80.10:FF:000001">
    <property type="entry name" value="Genome polyprotein"/>
    <property type="match status" value="1"/>
</dbReference>
<dbReference type="Gene3D" id="2.60.120.20">
    <property type="match status" value="3"/>
</dbReference>
<dbReference type="Gene3D" id="4.10.80.10">
    <property type="entry name" value="Picornavirus coat protein VP4"/>
    <property type="match status" value="1"/>
</dbReference>
<dbReference type="InterPro" id="IPR003138">
    <property type="entry name" value="Pico_P1A"/>
</dbReference>
<dbReference type="InterPro" id="IPR036988">
    <property type="entry name" value="Pico_P1A_sf"/>
</dbReference>
<dbReference type="InterPro" id="IPR001676">
    <property type="entry name" value="Picornavirus_capsid"/>
</dbReference>
<dbReference type="InterPro" id="IPR033703">
    <property type="entry name" value="Rhv-like"/>
</dbReference>
<dbReference type="InterPro" id="IPR029053">
    <property type="entry name" value="Viral_coat"/>
</dbReference>
<dbReference type="Pfam" id="PF02226">
    <property type="entry name" value="Pico_P1A"/>
    <property type="match status" value="1"/>
</dbReference>
<dbReference type="Pfam" id="PF00073">
    <property type="entry name" value="Rhv"/>
    <property type="match status" value="3"/>
</dbReference>
<dbReference type="SUPFAM" id="SSF88633">
    <property type="entry name" value="Positive stranded ssRNA viruses"/>
    <property type="match status" value="2"/>
</dbReference>
<reference key="1">
    <citation type="journal article" date="1996" name="J. Gen. Virol.">
        <title>The major echovirus group is genetically coherent and related to coxsackie B viruses.</title>
        <authorList>
            <person name="Huttunen P."/>
            <person name="Santti J."/>
            <person name="Pulli T."/>
            <person name="Hyypiae T."/>
        </authorList>
    </citation>
    <scope>NUCLEOTIDE SEQUENCE [GENOMIC RNA]</scope>
</reference>
<accession>Q66790</accession>
<organismHost>
    <name type="scientific">Homo sapiens</name>
    <name type="common">Human</name>
    <dbReference type="NCBI Taxonomy" id="9606"/>
</organismHost>
<evidence type="ECO:0000250" key="1">
    <source>
        <dbReference type="UniProtKB" id="P03300"/>
    </source>
</evidence>
<evidence type="ECO:0000250" key="2">
    <source>
        <dbReference type="UniProtKB" id="P03301"/>
    </source>
</evidence>
<evidence type="ECO:0000305" key="3"/>
<feature type="initiator methionine" description="Removed; by host" evidence="1">
    <location>
        <position position="1"/>
    </location>
</feature>
<feature type="chain" id="PRO_0000449115" description="Genome polyprotein">
    <location>
        <begin position="2"/>
        <end position="862" status="greater than"/>
    </location>
</feature>
<feature type="chain" id="PRO_0000449116" description="P1">
    <location>
        <begin position="2"/>
        <end position="862"/>
    </location>
</feature>
<feature type="chain" id="PRO_0000311060" description="Capsid protein VP0">
    <location>
        <begin position="2"/>
        <end position="331"/>
    </location>
</feature>
<feature type="chain" id="PRO_0000039725" description="Capsid protein VP4">
    <location>
        <begin position="2"/>
        <end position="69"/>
    </location>
</feature>
<feature type="chain" id="PRO_0000039726" description="Capsid protein VP2">
    <location>
        <begin position="70"/>
        <end position="331"/>
    </location>
</feature>
<feature type="chain" id="PRO_0000039727" description="Capsid protein VP3">
    <location>
        <begin position="332"/>
        <end position="570"/>
    </location>
</feature>
<feature type="chain" id="PRO_0000039728" description="Capsid protein VP1">
    <location>
        <begin position="571"/>
        <end position="862" status="greater than"/>
    </location>
</feature>
<feature type="site" description="Cleavage; by autolysis" evidence="1">
    <location>
        <begin position="69"/>
        <end position="70"/>
    </location>
</feature>
<feature type="site" description="Cleavage; by protease 3C" evidence="2">
    <location>
        <begin position="331"/>
        <end position="332"/>
    </location>
</feature>
<feature type="lipid moiety-binding region" description="N-myristoyl glycine; by host" evidence="1">
    <location>
        <position position="2"/>
    </location>
</feature>
<feature type="non-terminal residue">
    <location>
        <position position="862"/>
    </location>
</feature>
<name>POLG_EC16H</name>